<feature type="peptide" id="PRO_0000366109" description="Peptide 9797">
    <location>
        <begin position="1"/>
        <end position="34" status="greater than"/>
    </location>
</feature>
<feature type="non-terminal residue">
    <location>
        <position position="34"/>
    </location>
</feature>
<comment type="subcellular location">
    <subcellularLocation>
        <location evidence="1">Secreted</location>
    </subcellularLocation>
</comment>
<comment type="tissue specificity">
    <text evidence="2">Expressed by the venom gland.</text>
</comment>
<comment type="mass spectrometry"/>
<protein>
    <recommendedName>
        <fullName>Peptide 9797</fullName>
    </recommendedName>
</protein>
<evidence type="ECO:0000269" key="1">
    <source>
    </source>
</evidence>
<evidence type="ECO:0000305" key="2">
    <source>
    </source>
</evidence>
<organism>
    <name type="scientific">Tityus stigmurus</name>
    <name type="common">Brazilian scorpion</name>
    <dbReference type="NCBI Taxonomy" id="50344"/>
    <lineage>
        <taxon>Eukaryota</taxon>
        <taxon>Metazoa</taxon>
        <taxon>Ecdysozoa</taxon>
        <taxon>Arthropoda</taxon>
        <taxon>Chelicerata</taxon>
        <taxon>Arachnida</taxon>
        <taxon>Scorpiones</taxon>
        <taxon>Buthida</taxon>
        <taxon>Buthoidea</taxon>
        <taxon>Buthidae</taxon>
        <taxon>Tityus</taxon>
    </lineage>
</organism>
<sequence>AENRERVMVQGEEENTKELTGIEFENGFISCMQN</sequence>
<name>P9797_TITST</name>
<keyword id="KW-0903">Direct protein sequencing</keyword>
<keyword id="KW-0964">Secreted</keyword>
<accession>P0C8X1</accession>
<reference key="1">
    <citation type="journal article" date="2007" name="Comp. Biochem. Physiol.">
        <title>Proteomic analysis of the venom from the scorpion Tityus stigmurus: biochemical and physiological comparison with other Tityus species.</title>
        <authorList>
            <person name="Batista C.V.F."/>
            <person name="Roman-Gonzalez S.A."/>
            <person name="Salas-Castillo S.P."/>
            <person name="Zamudio F.Z."/>
            <person name="Gomez-Lagunas F."/>
            <person name="Possani L.D."/>
        </authorList>
    </citation>
    <scope>PROTEIN SEQUENCE</scope>
    <scope>MASS SPECTROMETRY</scope>
    <scope>SUBCELLULAR LOCATION</scope>
    <source>
        <tissue>Venom</tissue>
    </source>
</reference>
<dbReference type="GO" id="GO:0005576">
    <property type="term" value="C:extracellular region"/>
    <property type="evidence" value="ECO:0007669"/>
    <property type="project" value="UniProtKB-SubCell"/>
</dbReference>
<proteinExistence type="evidence at protein level"/>